<organism>
    <name type="scientific">Borrelia turicatae (strain 91E135)</name>
    <dbReference type="NCBI Taxonomy" id="314724"/>
    <lineage>
        <taxon>Bacteria</taxon>
        <taxon>Pseudomonadati</taxon>
        <taxon>Spirochaetota</taxon>
        <taxon>Spirochaetia</taxon>
        <taxon>Spirochaetales</taxon>
        <taxon>Borreliaceae</taxon>
        <taxon>Borrelia</taxon>
    </lineage>
</organism>
<proteinExistence type="inferred from homology"/>
<reference key="1">
    <citation type="submission" date="2004-12" db="EMBL/GenBank/DDBJ databases">
        <title>The genome sequence of Borrelia hermsii and Borrelia turicatae: comparative analysis of two agents of endemic N. America relapsing fever.</title>
        <authorList>
            <person name="Porcella S.F."/>
            <person name="Raffel S.J."/>
            <person name="Schrumpf M.E."/>
            <person name="Montgomery B."/>
            <person name="Smith T."/>
            <person name="Schwan T.G."/>
        </authorList>
    </citation>
    <scope>NUCLEOTIDE SEQUENCE [LARGE SCALE GENOMIC DNA]</scope>
    <source>
        <strain>91E135</strain>
    </source>
</reference>
<sequence length="182" mass="20318">MSYVPALKKHYKDNIIKELVSEFQYKSIMQAPKIEKIIVSMGVGDAVKNKKLLDSAVYELSQITGQRAVKTKAKKAIAGFKIRQGQEIGAKVTLRGNIMYEFLYKLINLALPRVKDFRGVNGNAFDGNGNYSFGIAEQIIFSEIDYDKIERISGLNVTIVTTALNDREGKALLSKFGMPFSN</sequence>
<keyword id="KW-1185">Reference proteome</keyword>
<keyword id="KW-0687">Ribonucleoprotein</keyword>
<keyword id="KW-0689">Ribosomal protein</keyword>
<keyword id="KW-0694">RNA-binding</keyword>
<keyword id="KW-0699">rRNA-binding</keyword>
<keyword id="KW-0820">tRNA-binding</keyword>
<protein>
    <recommendedName>
        <fullName evidence="1">Large ribosomal subunit protein uL5</fullName>
    </recommendedName>
    <alternativeName>
        <fullName evidence="2">50S ribosomal protein L5</fullName>
    </alternativeName>
</protein>
<accession>A1QZS6</accession>
<dbReference type="EMBL" id="CP000049">
    <property type="protein sequence ID" value="AAX17818.1"/>
    <property type="molecule type" value="Genomic_DNA"/>
</dbReference>
<dbReference type="RefSeq" id="WP_011772437.1">
    <property type="nucleotide sequence ID" value="NC_008710.1"/>
</dbReference>
<dbReference type="SMR" id="A1QZS6"/>
<dbReference type="KEGG" id="btu:BT0490"/>
<dbReference type="eggNOG" id="COG0094">
    <property type="taxonomic scope" value="Bacteria"/>
</dbReference>
<dbReference type="HOGENOM" id="CLU_061015_2_1_12"/>
<dbReference type="Proteomes" id="UP000001205">
    <property type="component" value="Chromosome"/>
</dbReference>
<dbReference type="GO" id="GO:1990904">
    <property type="term" value="C:ribonucleoprotein complex"/>
    <property type="evidence" value="ECO:0007669"/>
    <property type="project" value="UniProtKB-KW"/>
</dbReference>
<dbReference type="GO" id="GO:0005840">
    <property type="term" value="C:ribosome"/>
    <property type="evidence" value="ECO:0007669"/>
    <property type="project" value="UniProtKB-KW"/>
</dbReference>
<dbReference type="GO" id="GO:0019843">
    <property type="term" value="F:rRNA binding"/>
    <property type="evidence" value="ECO:0007669"/>
    <property type="project" value="UniProtKB-UniRule"/>
</dbReference>
<dbReference type="GO" id="GO:0003735">
    <property type="term" value="F:structural constituent of ribosome"/>
    <property type="evidence" value="ECO:0007669"/>
    <property type="project" value="InterPro"/>
</dbReference>
<dbReference type="GO" id="GO:0000049">
    <property type="term" value="F:tRNA binding"/>
    <property type="evidence" value="ECO:0007669"/>
    <property type="project" value="UniProtKB-UniRule"/>
</dbReference>
<dbReference type="GO" id="GO:0006412">
    <property type="term" value="P:translation"/>
    <property type="evidence" value="ECO:0007669"/>
    <property type="project" value="UniProtKB-UniRule"/>
</dbReference>
<dbReference type="FunFam" id="3.30.1440.10:FF:000001">
    <property type="entry name" value="50S ribosomal protein L5"/>
    <property type="match status" value="1"/>
</dbReference>
<dbReference type="Gene3D" id="3.30.1440.10">
    <property type="match status" value="1"/>
</dbReference>
<dbReference type="HAMAP" id="MF_01333_B">
    <property type="entry name" value="Ribosomal_uL5_B"/>
    <property type="match status" value="1"/>
</dbReference>
<dbReference type="InterPro" id="IPR002132">
    <property type="entry name" value="Ribosomal_uL5"/>
</dbReference>
<dbReference type="InterPro" id="IPR020930">
    <property type="entry name" value="Ribosomal_uL5_bac-type"/>
</dbReference>
<dbReference type="InterPro" id="IPR031309">
    <property type="entry name" value="Ribosomal_uL5_C"/>
</dbReference>
<dbReference type="InterPro" id="IPR020929">
    <property type="entry name" value="Ribosomal_uL5_CS"/>
</dbReference>
<dbReference type="InterPro" id="IPR022803">
    <property type="entry name" value="Ribosomal_uL5_dom_sf"/>
</dbReference>
<dbReference type="InterPro" id="IPR031310">
    <property type="entry name" value="Ribosomal_uL5_N"/>
</dbReference>
<dbReference type="NCBIfam" id="NF000585">
    <property type="entry name" value="PRK00010.1"/>
    <property type="match status" value="1"/>
</dbReference>
<dbReference type="PANTHER" id="PTHR11994">
    <property type="entry name" value="60S RIBOSOMAL PROTEIN L11-RELATED"/>
    <property type="match status" value="1"/>
</dbReference>
<dbReference type="Pfam" id="PF00281">
    <property type="entry name" value="Ribosomal_L5"/>
    <property type="match status" value="1"/>
</dbReference>
<dbReference type="Pfam" id="PF00673">
    <property type="entry name" value="Ribosomal_L5_C"/>
    <property type="match status" value="1"/>
</dbReference>
<dbReference type="PIRSF" id="PIRSF002161">
    <property type="entry name" value="Ribosomal_L5"/>
    <property type="match status" value="1"/>
</dbReference>
<dbReference type="SUPFAM" id="SSF55282">
    <property type="entry name" value="RL5-like"/>
    <property type="match status" value="1"/>
</dbReference>
<dbReference type="PROSITE" id="PS00358">
    <property type="entry name" value="RIBOSOMAL_L5"/>
    <property type="match status" value="1"/>
</dbReference>
<gene>
    <name evidence="1" type="primary">rplE</name>
    <name type="ordered locus">BT0490</name>
</gene>
<name>RL5_BORT9</name>
<feature type="chain" id="PRO_1000166113" description="Large ribosomal subunit protein uL5">
    <location>
        <begin position="1"/>
        <end position="182"/>
    </location>
</feature>
<evidence type="ECO:0000255" key="1">
    <source>
        <dbReference type="HAMAP-Rule" id="MF_01333"/>
    </source>
</evidence>
<evidence type="ECO:0000305" key="2"/>
<comment type="function">
    <text evidence="1">This is one of the proteins that bind and probably mediate the attachment of the 5S RNA into the large ribosomal subunit, where it forms part of the central protuberance. In the 70S ribosome it contacts protein S13 of the 30S subunit (bridge B1b), connecting the 2 subunits; this bridge is implicated in subunit movement. Contacts the P site tRNA; the 5S rRNA and some of its associated proteins might help stabilize positioning of ribosome-bound tRNAs.</text>
</comment>
<comment type="subunit">
    <text evidence="1">Part of the 50S ribosomal subunit; part of the 5S rRNA/L5/L18/L25 subcomplex. Contacts the 5S rRNA and the P site tRNA. Forms a bridge to the 30S subunit in the 70S ribosome.</text>
</comment>
<comment type="similarity">
    <text evidence="1">Belongs to the universal ribosomal protein uL5 family.</text>
</comment>